<keyword id="KW-0010">Activator</keyword>
<keyword id="KW-0175">Coiled coil</keyword>
<keyword id="KW-0963">Cytoplasm</keyword>
<keyword id="KW-0804">Transcription</keyword>
<keyword id="KW-0805">Transcription regulation</keyword>
<organism>
    <name type="scientific">Salmonella heidelberg (strain SL476)</name>
    <dbReference type="NCBI Taxonomy" id="454169"/>
    <lineage>
        <taxon>Bacteria</taxon>
        <taxon>Pseudomonadati</taxon>
        <taxon>Pseudomonadota</taxon>
        <taxon>Gammaproteobacteria</taxon>
        <taxon>Enterobacterales</taxon>
        <taxon>Enterobacteriaceae</taxon>
        <taxon>Salmonella</taxon>
    </lineage>
</organism>
<proteinExistence type="inferred from homology"/>
<evidence type="ECO:0000255" key="1">
    <source>
        <dbReference type="HAMAP-Rule" id="MF_01178"/>
    </source>
</evidence>
<comment type="function">
    <text evidence="1">Binds to the sigma-S subunit of RNA polymerase, activating expression of sigma-S-regulated genes. Stimulates RNA polymerase holoenzyme formation and may bind to several other sigma factors, such as sigma-70 and sigma-32.</text>
</comment>
<comment type="subcellular location">
    <subcellularLocation>
        <location evidence="1">Cytoplasm</location>
    </subcellularLocation>
</comment>
<comment type="similarity">
    <text evidence="1">Belongs to the Crl family.</text>
</comment>
<name>CRL_SALHS</name>
<gene>
    <name evidence="1" type="primary">crl</name>
    <name type="ordered locus">SeHA_C0360</name>
</gene>
<protein>
    <recommendedName>
        <fullName evidence="1">Sigma factor-binding protein Crl</fullName>
    </recommendedName>
</protein>
<sequence length="133" mass="15797">MTLPSGHPKSRLIKKFTALGPYIREGQCEDNRFFFDCLAVCVNVKPAPEKREFWGWWMELEAQEKRFTYRYQFGLFDKEGNWTVVPINETEVVERLEYTLREFHEKLRDLLISMELALEPSDDFNDEPVKLSA</sequence>
<accession>B4T7Q2</accession>
<dbReference type="EMBL" id="CP001120">
    <property type="protein sequence ID" value="ACF66013.1"/>
    <property type="molecule type" value="Genomic_DNA"/>
</dbReference>
<dbReference type="RefSeq" id="WP_000174696.1">
    <property type="nucleotide sequence ID" value="NC_011083.1"/>
</dbReference>
<dbReference type="SMR" id="B4T7Q2"/>
<dbReference type="KEGG" id="seh:SeHA_C0360"/>
<dbReference type="HOGENOM" id="CLU_136773_0_0_6"/>
<dbReference type="Proteomes" id="UP000001866">
    <property type="component" value="Chromosome"/>
</dbReference>
<dbReference type="GO" id="GO:0005737">
    <property type="term" value="C:cytoplasm"/>
    <property type="evidence" value="ECO:0007669"/>
    <property type="project" value="UniProtKB-SubCell"/>
</dbReference>
<dbReference type="GO" id="GO:0045893">
    <property type="term" value="P:positive regulation of DNA-templated transcription"/>
    <property type="evidence" value="ECO:0007669"/>
    <property type="project" value="UniProtKB-UniRule"/>
</dbReference>
<dbReference type="Gene3D" id="3.30.310.230">
    <property type="entry name" value="Sigma factor-binding protein Crl monomer"/>
    <property type="match status" value="1"/>
</dbReference>
<dbReference type="HAMAP" id="MF_01178">
    <property type="entry name" value="Crl"/>
    <property type="match status" value="1"/>
</dbReference>
<dbReference type="InterPro" id="IPR009986">
    <property type="entry name" value="Tscrpt_reg_Crl"/>
</dbReference>
<dbReference type="InterPro" id="IPR038208">
    <property type="entry name" value="Tscrpt_reg_Crl_sf"/>
</dbReference>
<dbReference type="NCBIfam" id="NF008217">
    <property type="entry name" value="PRK10984.1"/>
    <property type="match status" value="1"/>
</dbReference>
<dbReference type="Pfam" id="PF07417">
    <property type="entry name" value="Crl"/>
    <property type="match status" value="1"/>
</dbReference>
<reference key="1">
    <citation type="journal article" date="2011" name="J. Bacteriol.">
        <title>Comparative genomics of 28 Salmonella enterica isolates: evidence for CRISPR-mediated adaptive sublineage evolution.</title>
        <authorList>
            <person name="Fricke W.F."/>
            <person name="Mammel M.K."/>
            <person name="McDermott P.F."/>
            <person name="Tartera C."/>
            <person name="White D.G."/>
            <person name="Leclerc J.E."/>
            <person name="Ravel J."/>
            <person name="Cebula T.A."/>
        </authorList>
    </citation>
    <scope>NUCLEOTIDE SEQUENCE [LARGE SCALE GENOMIC DNA]</scope>
    <source>
        <strain>SL476</strain>
    </source>
</reference>
<feature type="chain" id="PRO_1000138147" description="Sigma factor-binding protein Crl">
    <location>
        <begin position="1"/>
        <end position="133"/>
    </location>
</feature>
<feature type="region of interest" description="Essential for activity" evidence="1">
    <location>
        <begin position="99"/>
        <end position="122"/>
    </location>
</feature>
<feature type="coiled-coil region" evidence="1">
    <location>
        <begin position="90"/>
        <end position="111"/>
    </location>
</feature>